<gene>
    <name evidence="1" type="primary">rpsF</name>
    <name type="ordered locus">Tmel_0636</name>
</gene>
<evidence type="ECO:0000255" key="1">
    <source>
        <dbReference type="HAMAP-Rule" id="MF_00360"/>
    </source>
</evidence>
<evidence type="ECO:0000256" key="2">
    <source>
        <dbReference type="SAM" id="MobiDB-lite"/>
    </source>
</evidence>
<evidence type="ECO:0000305" key="3"/>
<comment type="function">
    <text evidence="1">Binds together with bS18 to 16S ribosomal RNA.</text>
</comment>
<comment type="similarity">
    <text evidence="1">Belongs to the bacterial ribosomal protein bS6 family.</text>
</comment>
<dbReference type="EMBL" id="CP000716">
    <property type="protein sequence ID" value="ABR30500.1"/>
    <property type="molecule type" value="Genomic_DNA"/>
</dbReference>
<dbReference type="RefSeq" id="WP_012056861.1">
    <property type="nucleotide sequence ID" value="NC_009616.1"/>
</dbReference>
<dbReference type="SMR" id="A6LKP9"/>
<dbReference type="STRING" id="391009.Tmel_0636"/>
<dbReference type="KEGG" id="tme:Tmel_0636"/>
<dbReference type="eggNOG" id="COG0360">
    <property type="taxonomic scope" value="Bacteria"/>
</dbReference>
<dbReference type="HOGENOM" id="CLU_113441_5_0_0"/>
<dbReference type="OrthoDB" id="9812702at2"/>
<dbReference type="Proteomes" id="UP000001110">
    <property type="component" value="Chromosome"/>
</dbReference>
<dbReference type="GO" id="GO:0005737">
    <property type="term" value="C:cytoplasm"/>
    <property type="evidence" value="ECO:0007669"/>
    <property type="project" value="UniProtKB-ARBA"/>
</dbReference>
<dbReference type="GO" id="GO:1990904">
    <property type="term" value="C:ribonucleoprotein complex"/>
    <property type="evidence" value="ECO:0007669"/>
    <property type="project" value="UniProtKB-KW"/>
</dbReference>
<dbReference type="GO" id="GO:0005840">
    <property type="term" value="C:ribosome"/>
    <property type="evidence" value="ECO:0007669"/>
    <property type="project" value="UniProtKB-KW"/>
</dbReference>
<dbReference type="GO" id="GO:0070181">
    <property type="term" value="F:small ribosomal subunit rRNA binding"/>
    <property type="evidence" value="ECO:0007669"/>
    <property type="project" value="TreeGrafter"/>
</dbReference>
<dbReference type="GO" id="GO:0003735">
    <property type="term" value="F:structural constituent of ribosome"/>
    <property type="evidence" value="ECO:0007669"/>
    <property type="project" value="InterPro"/>
</dbReference>
<dbReference type="GO" id="GO:0006412">
    <property type="term" value="P:translation"/>
    <property type="evidence" value="ECO:0007669"/>
    <property type="project" value="UniProtKB-UniRule"/>
</dbReference>
<dbReference type="CDD" id="cd00473">
    <property type="entry name" value="bS6"/>
    <property type="match status" value="1"/>
</dbReference>
<dbReference type="Gene3D" id="3.30.70.60">
    <property type="match status" value="1"/>
</dbReference>
<dbReference type="HAMAP" id="MF_00360">
    <property type="entry name" value="Ribosomal_bS6"/>
    <property type="match status" value="1"/>
</dbReference>
<dbReference type="InterPro" id="IPR000529">
    <property type="entry name" value="Ribosomal_bS6"/>
</dbReference>
<dbReference type="InterPro" id="IPR035980">
    <property type="entry name" value="Ribosomal_bS6_sf"/>
</dbReference>
<dbReference type="InterPro" id="IPR020814">
    <property type="entry name" value="Ribosomal_S6_plastid/chlpt"/>
</dbReference>
<dbReference type="InterPro" id="IPR014717">
    <property type="entry name" value="Transl_elong_EF1B/ribsomal_bS6"/>
</dbReference>
<dbReference type="NCBIfam" id="TIGR00166">
    <property type="entry name" value="S6"/>
    <property type="match status" value="1"/>
</dbReference>
<dbReference type="PANTHER" id="PTHR21011">
    <property type="entry name" value="MITOCHONDRIAL 28S RIBOSOMAL PROTEIN S6"/>
    <property type="match status" value="1"/>
</dbReference>
<dbReference type="PANTHER" id="PTHR21011:SF1">
    <property type="entry name" value="SMALL RIBOSOMAL SUBUNIT PROTEIN BS6M"/>
    <property type="match status" value="1"/>
</dbReference>
<dbReference type="Pfam" id="PF01250">
    <property type="entry name" value="Ribosomal_S6"/>
    <property type="match status" value="1"/>
</dbReference>
<dbReference type="SUPFAM" id="SSF54995">
    <property type="entry name" value="Ribosomal protein S6"/>
    <property type="match status" value="1"/>
</dbReference>
<keyword id="KW-0687">Ribonucleoprotein</keyword>
<keyword id="KW-0689">Ribosomal protein</keyword>
<keyword id="KW-0694">RNA-binding</keyword>
<keyword id="KW-0699">rRNA-binding</keyword>
<protein>
    <recommendedName>
        <fullName evidence="1">Small ribosomal subunit protein bS6</fullName>
    </recommendedName>
    <alternativeName>
        <fullName evidence="3">30S ribosomal protein S6</fullName>
    </alternativeName>
</protein>
<sequence>MRIYETMFIIKPDIAEEEREKIAQGVVDYLKEKLGAHVDNVDRWGIRKTAYPLKKYNEADYTIVYFRGEGLDITVLESYFRVRPEFLRWQTFRRIDLEKKEKKQSRKEEGSENSEKVEE</sequence>
<proteinExistence type="inferred from homology"/>
<organism>
    <name type="scientific">Thermosipho melanesiensis (strain DSM 12029 / CIP 104789 / BI429)</name>
    <dbReference type="NCBI Taxonomy" id="391009"/>
    <lineage>
        <taxon>Bacteria</taxon>
        <taxon>Thermotogati</taxon>
        <taxon>Thermotogota</taxon>
        <taxon>Thermotogae</taxon>
        <taxon>Thermotogales</taxon>
        <taxon>Fervidobacteriaceae</taxon>
        <taxon>Thermosipho</taxon>
    </lineage>
</organism>
<accession>A6LKP9</accession>
<name>RS6_THEM4</name>
<feature type="chain" id="PRO_1000059862" description="Small ribosomal subunit protein bS6">
    <location>
        <begin position="1"/>
        <end position="119"/>
    </location>
</feature>
<feature type="region of interest" description="Disordered" evidence="2">
    <location>
        <begin position="99"/>
        <end position="119"/>
    </location>
</feature>
<reference key="1">
    <citation type="submission" date="2007-05" db="EMBL/GenBank/DDBJ databases">
        <title>Complete sequence of Thermosipho melanesiensis BI429.</title>
        <authorList>
            <consortium name="US DOE Joint Genome Institute"/>
            <person name="Copeland A."/>
            <person name="Lucas S."/>
            <person name="Lapidus A."/>
            <person name="Barry K."/>
            <person name="Glavina del Rio T."/>
            <person name="Dalin E."/>
            <person name="Tice H."/>
            <person name="Pitluck S."/>
            <person name="Chertkov O."/>
            <person name="Brettin T."/>
            <person name="Bruce D."/>
            <person name="Detter J.C."/>
            <person name="Han C."/>
            <person name="Schmutz J."/>
            <person name="Larimer F."/>
            <person name="Land M."/>
            <person name="Hauser L."/>
            <person name="Kyrpides N."/>
            <person name="Mikhailova N."/>
            <person name="Nelson K."/>
            <person name="Gogarten J.P."/>
            <person name="Noll K."/>
            <person name="Richardson P."/>
        </authorList>
    </citation>
    <scope>NUCLEOTIDE SEQUENCE [LARGE SCALE GENOMIC DNA]</scope>
    <source>
        <strain>DSM 12029 / CIP 104789 / BI429</strain>
    </source>
</reference>